<name>RLMH_KORVE</name>
<protein>
    <recommendedName>
        <fullName evidence="1">Ribosomal RNA large subunit methyltransferase H</fullName>
        <ecNumber evidence="1">2.1.1.177</ecNumber>
    </recommendedName>
    <alternativeName>
        <fullName evidence="1">23S rRNA (pseudouridine1915-N3)-methyltransferase</fullName>
    </alternativeName>
    <alternativeName>
        <fullName evidence="1">23S rRNA m3Psi1915 methyltransferase</fullName>
    </alternativeName>
    <alternativeName>
        <fullName evidence="1">rRNA (pseudouridine-N3-)-methyltransferase RlmH</fullName>
    </alternativeName>
</protein>
<comment type="function">
    <text evidence="1">Specifically methylates the pseudouridine at position 1915 (m3Psi1915) in 23S rRNA.</text>
</comment>
<comment type="catalytic activity">
    <reaction evidence="1">
        <text>pseudouridine(1915) in 23S rRNA + S-adenosyl-L-methionine = N(3)-methylpseudouridine(1915) in 23S rRNA + S-adenosyl-L-homocysteine + H(+)</text>
        <dbReference type="Rhea" id="RHEA:42752"/>
        <dbReference type="Rhea" id="RHEA-COMP:10221"/>
        <dbReference type="Rhea" id="RHEA-COMP:10222"/>
        <dbReference type="ChEBI" id="CHEBI:15378"/>
        <dbReference type="ChEBI" id="CHEBI:57856"/>
        <dbReference type="ChEBI" id="CHEBI:59789"/>
        <dbReference type="ChEBI" id="CHEBI:65314"/>
        <dbReference type="ChEBI" id="CHEBI:74486"/>
        <dbReference type="EC" id="2.1.1.177"/>
    </reaction>
</comment>
<comment type="subunit">
    <text evidence="1">Homodimer.</text>
</comment>
<comment type="subcellular location">
    <subcellularLocation>
        <location evidence="1">Cytoplasm</location>
    </subcellularLocation>
</comment>
<comment type="similarity">
    <text evidence="1">Belongs to the RNA methyltransferase RlmH family.</text>
</comment>
<accession>Q1IVS1</accession>
<reference key="1">
    <citation type="journal article" date="2009" name="Appl. Environ. Microbiol.">
        <title>Three genomes from the phylum Acidobacteria provide insight into the lifestyles of these microorganisms in soils.</title>
        <authorList>
            <person name="Ward N.L."/>
            <person name="Challacombe J.F."/>
            <person name="Janssen P.H."/>
            <person name="Henrissat B."/>
            <person name="Coutinho P.M."/>
            <person name="Wu M."/>
            <person name="Xie G."/>
            <person name="Haft D.H."/>
            <person name="Sait M."/>
            <person name="Badger J."/>
            <person name="Barabote R.D."/>
            <person name="Bradley B."/>
            <person name="Brettin T.S."/>
            <person name="Brinkac L.M."/>
            <person name="Bruce D."/>
            <person name="Creasy T."/>
            <person name="Daugherty S.C."/>
            <person name="Davidsen T.M."/>
            <person name="DeBoy R.T."/>
            <person name="Detter J.C."/>
            <person name="Dodson R.J."/>
            <person name="Durkin A.S."/>
            <person name="Ganapathy A."/>
            <person name="Gwinn-Giglio M."/>
            <person name="Han C.S."/>
            <person name="Khouri H."/>
            <person name="Kiss H."/>
            <person name="Kothari S.P."/>
            <person name="Madupu R."/>
            <person name="Nelson K.E."/>
            <person name="Nelson W.C."/>
            <person name="Paulsen I."/>
            <person name="Penn K."/>
            <person name="Ren Q."/>
            <person name="Rosovitz M.J."/>
            <person name="Selengut J.D."/>
            <person name="Shrivastava S."/>
            <person name="Sullivan S.A."/>
            <person name="Tapia R."/>
            <person name="Thompson L.S."/>
            <person name="Watkins K.L."/>
            <person name="Yang Q."/>
            <person name="Yu C."/>
            <person name="Zafar N."/>
            <person name="Zhou L."/>
            <person name="Kuske C.R."/>
        </authorList>
    </citation>
    <scope>NUCLEOTIDE SEQUENCE [LARGE SCALE GENOMIC DNA]</scope>
    <source>
        <strain>Ellin345</strain>
    </source>
</reference>
<proteinExistence type="inferred from homology"/>
<gene>
    <name evidence="1" type="primary">rlmH</name>
    <name type="ordered locus">Acid345_0024</name>
</gene>
<sequence length="146" mass="16332">MKLRVVWIGKTKESAIQTLTGEYLKRLSRYVATEGLEIGSEEALLKLKDRPGRTAPVLVLMDERGKQVGSEELANFLGYHRDQGVQDLIFAIGPSDGWQKETLKSATQVLSMGKMTLPHELARVVLLEQLYRGYTILTGHPYHGGH</sequence>
<organism>
    <name type="scientific">Koribacter versatilis (strain Ellin345)</name>
    <dbReference type="NCBI Taxonomy" id="204669"/>
    <lineage>
        <taxon>Bacteria</taxon>
        <taxon>Pseudomonadati</taxon>
        <taxon>Acidobacteriota</taxon>
        <taxon>Terriglobia</taxon>
        <taxon>Terriglobales</taxon>
        <taxon>Candidatus Korobacteraceae</taxon>
        <taxon>Candidatus Korobacter</taxon>
    </lineage>
</organism>
<evidence type="ECO:0000255" key="1">
    <source>
        <dbReference type="HAMAP-Rule" id="MF_00658"/>
    </source>
</evidence>
<feature type="chain" id="PRO_0000260532" description="Ribosomal RNA large subunit methyltransferase H">
    <location>
        <begin position="1"/>
        <end position="146"/>
    </location>
</feature>
<feature type="binding site" evidence="1">
    <location>
        <position position="60"/>
    </location>
    <ligand>
        <name>S-adenosyl-L-methionine</name>
        <dbReference type="ChEBI" id="CHEBI:59789"/>
    </ligand>
</feature>
<feature type="binding site" evidence="1">
    <location>
        <position position="93"/>
    </location>
    <ligand>
        <name>S-adenosyl-L-methionine</name>
        <dbReference type="ChEBI" id="CHEBI:59789"/>
    </ligand>
</feature>
<feature type="binding site" evidence="1">
    <location>
        <begin position="112"/>
        <end position="117"/>
    </location>
    <ligand>
        <name>S-adenosyl-L-methionine</name>
        <dbReference type="ChEBI" id="CHEBI:59789"/>
    </ligand>
</feature>
<keyword id="KW-0963">Cytoplasm</keyword>
<keyword id="KW-0489">Methyltransferase</keyword>
<keyword id="KW-1185">Reference proteome</keyword>
<keyword id="KW-0698">rRNA processing</keyword>
<keyword id="KW-0949">S-adenosyl-L-methionine</keyword>
<keyword id="KW-0808">Transferase</keyword>
<dbReference type="EC" id="2.1.1.177" evidence="1"/>
<dbReference type="EMBL" id="CP000360">
    <property type="protein sequence ID" value="ABF39029.1"/>
    <property type="molecule type" value="Genomic_DNA"/>
</dbReference>
<dbReference type="RefSeq" id="WP_011520831.1">
    <property type="nucleotide sequence ID" value="NC_008009.1"/>
</dbReference>
<dbReference type="SMR" id="Q1IVS1"/>
<dbReference type="STRING" id="204669.Acid345_0024"/>
<dbReference type="EnsemblBacteria" id="ABF39029">
    <property type="protein sequence ID" value="ABF39029"/>
    <property type="gene ID" value="Acid345_0024"/>
</dbReference>
<dbReference type="KEGG" id="aba:Acid345_0024"/>
<dbReference type="eggNOG" id="COG1576">
    <property type="taxonomic scope" value="Bacteria"/>
</dbReference>
<dbReference type="HOGENOM" id="CLU_100552_1_0_0"/>
<dbReference type="OrthoDB" id="9806643at2"/>
<dbReference type="Proteomes" id="UP000002432">
    <property type="component" value="Chromosome"/>
</dbReference>
<dbReference type="GO" id="GO:0005737">
    <property type="term" value="C:cytoplasm"/>
    <property type="evidence" value="ECO:0007669"/>
    <property type="project" value="UniProtKB-SubCell"/>
</dbReference>
<dbReference type="GO" id="GO:0070038">
    <property type="term" value="F:rRNA (pseudouridine-N3-)-methyltransferase activity"/>
    <property type="evidence" value="ECO:0007669"/>
    <property type="project" value="UniProtKB-UniRule"/>
</dbReference>
<dbReference type="CDD" id="cd18081">
    <property type="entry name" value="RlmH-like"/>
    <property type="match status" value="1"/>
</dbReference>
<dbReference type="Gene3D" id="3.40.1280.10">
    <property type="match status" value="1"/>
</dbReference>
<dbReference type="HAMAP" id="MF_00658">
    <property type="entry name" value="23SrRNA_methyltr_H"/>
    <property type="match status" value="1"/>
</dbReference>
<dbReference type="InterPro" id="IPR029028">
    <property type="entry name" value="Alpha/beta_knot_MTases"/>
</dbReference>
<dbReference type="InterPro" id="IPR003742">
    <property type="entry name" value="RlmH-like"/>
</dbReference>
<dbReference type="InterPro" id="IPR029026">
    <property type="entry name" value="tRNA_m1G_MTases_N"/>
</dbReference>
<dbReference type="PANTHER" id="PTHR33603">
    <property type="entry name" value="METHYLTRANSFERASE"/>
    <property type="match status" value="1"/>
</dbReference>
<dbReference type="PANTHER" id="PTHR33603:SF1">
    <property type="entry name" value="RIBOSOMAL RNA LARGE SUBUNIT METHYLTRANSFERASE H"/>
    <property type="match status" value="1"/>
</dbReference>
<dbReference type="Pfam" id="PF02590">
    <property type="entry name" value="SPOUT_MTase"/>
    <property type="match status" value="1"/>
</dbReference>
<dbReference type="PIRSF" id="PIRSF004505">
    <property type="entry name" value="MT_bac"/>
    <property type="match status" value="1"/>
</dbReference>
<dbReference type="SUPFAM" id="SSF75217">
    <property type="entry name" value="alpha/beta knot"/>
    <property type="match status" value="1"/>
</dbReference>